<name>CLPP_CLOBL</name>
<reference key="1">
    <citation type="submission" date="2007-06" db="EMBL/GenBank/DDBJ databases">
        <authorList>
            <person name="Brinkac L.M."/>
            <person name="Daugherty S."/>
            <person name="Dodson R.J."/>
            <person name="Madupu R."/>
            <person name="Brown J.L."/>
            <person name="Bruce D."/>
            <person name="Detter C."/>
            <person name="Munk C."/>
            <person name="Smith L.A."/>
            <person name="Smith T.J."/>
            <person name="White O."/>
            <person name="Brettin T.S."/>
        </authorList>
    </citation>
    <scope>NUCLEOTIDE SEQUENCE [LARGE SCALE GENOMIC DNA]</scope>
    <source>
        <strain>Langeland / NCTC 10281 / Type F</strain>
    </source>
</reference>
<feature type="chain" id="PRO_1000026083" description="ATP-dependent Clp protease proteolytic subunit">
    <location>
        <begin position="1"/>
        <end position="194"/>
    </location>
</feature>
<feature type="active site" description="Nucleophile" evidence="1">
    <location>
        <position position="98"/>
    </location>
</feature>
<feature type="active site" evidence="1">
    <location>
        <position position="123"/>
    </location>
</feature>
<protein>
    <recommendedName>
        <fullName evidence="1">ATP-dependent Clp protease proteolytic subunit</fullName>
        <ecNumber evidence="1">3.4.21.92</ecNumber>
    </recommendedName>
    <alternativeName>
        <fullName evidence="1">Endopeptidase Clp</fullName>
    </alternativeName>
</protein>
<keyword id="KW-0963">Cytoplasm</keyword>
<keyword id="KW-0378">Hydrolase</keyword>
<keyword id="KW-0645">Protease</keyword>
<keyword id="KW-0720">Serine protease</keyword>
<evidence type="ECO:0000255" key="1">
    <source>
        <dbReference type="HAMAP-Rule" id="MF_00444"/>
    </source>
</evidence>
<comment type="function">
    <text evidence="1">Cleaves peptides in various proteins in a process that requires ATP hydrolysis. Has a chymotrypsin-like activity. Plays a major role in the degradation of misfolded proteins.</text>
</comment>
<comment type="catalytic activity">
    <reaction evidence="1">
        <text>Hydrolysis of proteins to small peptides in the presence of ATP and magnesium. alpha-casein is the usual test substrate. In the absence of ATP, only oligopeptides shorter than five residues are hydrolyzed (such as succinyl-Leu-Tyr-|-NHMec, and Leu-Tyr-Leu-|-Tyr-Trp, in which cleavage of the -Tyr-|-Leu- and -Tyr-|-Trp bonds also occurs).</text>
        <dbReference type="EC" id="3.4.21.92"/>
    </reaction>
</comment>
<comment type="subunit">
    <text evidence="1">Fourteen ClpP subunits assemble into 2 heptameric rings which stack back to back to give a disk-like structure with a central cavity, resembling the structure of eukaryotic proteasomes.</text>
</comment>
<comment type="subcellular location">
    <subcellularLocation>
        <location evidence="1">Cytoplasm</location>
    </subcellularLocation>
</comment>
<comment type="similarity">
    <text evidence="1">Belongs to the peptidase S14 family.</text>
</comment>
<accession>A7GIH2</accession>
<organism>
    <name type="scientific">Clostridium botulinum (strain Langeland / NCTC 10281 / Type F)</name>
    <dbReference type="NCBI Taxonomy" id="441772"/>
    <lineage>
        <taxon>Bacteria</taxon>
        <taxon>Bacillati</taxon>
        <taxon>Bacillota</taxon>
        <taxon>Clostridia</taxon>
        <taxon>Eubacteriales</taxon>
        <taxon>Clostridiaceae</taxon>
        <taxon>Clostridium</taxon>
    </lineage>
</organism>
<sequence length="194" mass="21503">MSLVPVVVEQTNRGERSYDIYSRLLKDRIIMLSEEVNDTTASLIVAQLLFLEAEDPDKDIHLYINSPGGSITSGMAIYDTMQYIKPDVSTICVGMAASMGAFLLAAGAKGKRYALPNSEVMIHQPLGGFRGQATDIGIHAERILKMKKKLNTILSDRTGKPLEQVELDTERDHFLSAEEAKEYGLIDEVIDKKK</sequence>
<dbReference type="EC" id="3.4.21.92" evidence="1"/>
<dbReference type="EMBL" id="CP000728">
    <property type="protein sequence ID" value="ABS40586.1"/>
    <property type="molecule type" value="Genomic_DNA"/>
</dbReference>
<dbReference type="RefSeq" id="WP_003357557.1">
    <property type="nucleotide sequence ID" value="NC_009699.1"/>
</dbReference>
<dbReference type="SMR" id="A7GIH2"/>
<dbReference type="MEROPS" id="S14.001"/>
<dbReference type="GeneID" id="5187372"/>
<dbReference type="KEGG" id="cbf:CLI_3370"/>
<dbReference type="HOGENOM" id="CLU_058707_3_2_9"/>
<dbReference type="Proteomes" id="UP000002410">
    <property type="component" value="Chromosome"/>
</dbReference>
<dbReference type="GO" id="GO:0005737">
    <property type="term" value="C:cytoplasm"/>
    <property type="evidence" value="ECO:0007669"/>
    <property type="project" value="UniProtKB-SubCell"/>
</dbReference>
<dbReference type="GO" id="GO:0009368">
    <property type="term" value="C:endopeptidase Clp complex"/>
    <property type="evidence" value="ECO:0007669"/>
    <property type="project" value="TreeGrafter"/>
</dbReference>
<dbReference type="GO" id="GO:0004176">
    <property type="term" value="F:ATP-dependent peptidase activity"/>
    <property type="evidence" value="ECO:0007669"/>
    <property type="project" value="InterPro"/>
</dbReference>
<dbReference type="GO" id="GO:0051117">
    <property type="term" value="F:ATPase binding"/>
    <property type="evidence" value="ECO:0007669"/>
    <property type="project" value="TreeGrafter"/>
</dbReference>
<dbReference type="GO" id="GO:0004252">
    <property type="term" value="F:serine-type endopeptidase activity"/>
    <property type="evidence" value="ECO:0007669"/>
    <property type="project" value="UniProtKB-UniRule"/>
</dbReference>
<dbReference type="GO" id="GO:0006515">
    <property type="term" value="P:protein quality control for misfolded or incompletely synthesized proteins"/>
    <property type="evidence" value="ECO:0007669"/>
    <property type="project" value="TreeGrafter"/>
</dbReference>
<dbReference type="CDD" id="cd07017">
    <property type="entry name" value="S14_ClpP_2"/>
    <property type="match status" value="1"/>
</dbReference>
<dbReference type="FunFam" id="3.90.226.10:FF:000001">
    <property type="entry name" value="ATP-dependent Clp protease proteolytic subunit"/>
    <property type="match status" value="1"/>
</dbReference>
<dbReference type="Gene3D" id="3.90.226.10">
    <property type="entry name" value="2-enoyl-CoA Hydratase, Chain A, domain 1"/>
    <property type="match status" value="1"/>
</dbReference>
<dbReference type="HAMAP" id="MF_00444">
    <property type="entry name" value="ClpP"/>
    <property type="match status" value="1"/>
</dbReference>
<dbReference type="InterPro" id="IPR001907">
    <property type="entry name" value="ClpP"/>
</dbReference>
<dbReference type="InterPro" id="IPR029045">
    <property type="entry name" value="ClpP/crotonase-like_dom_sf"/>
</dbReference>
<dbReference type="InterPro" id="IPR023562">
    <property type="entry name" value="ClpP/TepA"/>
</dbReference>
<dbReference type="InterPro" id="IPR033135">
    <property type="entry name" value="ClpP_His_AS"/>
</dbReference>
<dbReference type="InterPro" id="IPR018215">
    <property type="entry name" value="ClpP_Ser_AS"/>
</dbReference>
<dbReference type="NCBIfam" id="TIGR00493">
    <property type="entry name" value="clpP"/>
    <property type="match status" value="1"/>
</dbReference>
<dbReference type="NCBIfam" id="NF001368">
    <property type="entry name" value="PRK00277.1"/>
    <property type="match status" value="1"/>
</dbReference>
<dbReference type="NCBIfam" id="NF009205">
    <property type="entry name" value="PRK12553.1"/>
    <property type="match status" value="1"/>
</dbReference>
<dbReference type="PANTHER" id="PTHR10381">
    <property type="entry name" value="ATP-DEPENDENT CLP PROTEASE PROTEOLYTIC SUBUNIT"/>
    <property type="match status" value="1"/>
</dbReference>
<dbReference type="PANTHER" id="PTHR10381:SF70">
    <property type="entry name" value="ATP-DEPENDENT CLP PROTEASE PROTEOLYTIC SUBUNIT"/>
    <property type="match status" value="1"/>
</dbReference>
<dbReference type="Pfam" id="PF00574">
    <property type="entry name" value="CLP_protease"/>
    <property type="match status" value="1"/>
</dbReference>
<dbReference type="PRINTS" id="PR00127">
    <property type="entry name" value="CLPPROTEASEP"/>
</dbReference>
<dbReference type="SUPFAM" id="SSF52096">
    <property type="entry name" value="ClpP/crotonase"/>
    <property type="match status" value="1"/>
</dbReference>
<dbReference type="PROSITE" id="PS00382">
    <property type="entry name" value="CLP_PROTEASE_HIS"/>
    <property type="match status" value="1"/>
</dbReference>
<dbReference type="PROSITE" id="PS00381">
    <property type="entry name" value="CLP_PROTEASE_SER"/>
    <property type="match status" value="1"/>
</dbReference>
<gene>
    <name evidence="1" type="primary">clpP</name>
    <name type="ordered locus">CLI_3370</name>
</gene>
<proteinExistence type="inferred from homology"/>